<protein>
    <recommendedName>
        <fullName evidence="21">Bifunctional aldehyde-alcohol dehydrogenase AdhE</fullName>
    </recommendedName>
    <alternativeName>
        <fullName evidence="18">Alcohol dehydrogenase E</fullName>
    </alternativeName>
    <domain>
        <recommendedName>
            <fullName evidence="19">Acetaldehyde dehydrogenase [acetylating]</fullName>
            <shortName evidence="20">ACDH</shortName>
            <ecNumber evidence="3 4 8 11">1.2.1.10</ecNumber>
        </recommendedName>
    </domain>
    <domain>
        <recommendedName>
            <fullName evidence="19">Alcohol dehydrogenase</fullName>
            <shortName evidence="20">ADH</shortName>
            <ecNumber evidence="4 8 11">1.1.1.1</ecNumber>
        </recommendedName>
    </domain>
</protein>
<accession>P0A9Q7</accession>
<accession>P17547</accession>
<reference key="1">
    <citation type="journal article" date="1989" name="Gene">
        <title>Cloning and sequence analysis of the fermentative alcohol-dehydrogenase-encoding gene of Escherichia coli.</title>
        <authorList>
            <person name="Goodlove P.E."/>
            <person name="Cunningham P.R."/>
            <person name="Parker J."/>
            <person name="Clark D.P."/>
        </authorList>
    </citation>
    <scope>NUCLEOTIDE SEQUENCE [GENOMIC DNA]</scope>
    <scope>PROTEIN SEQUENCE OF 2-11</scope>
</reference>
<reference key="2">
    <citation type="journal article" date="1991" name="FEBS Lett.">
        <title>Pyruvate-formate-lyase-deactivase and acetyl-CoA reductase activities of Escherichia coli reside on a polymeric protein particle encoded by adhE.</title>
        <authorList>
            <person name="Kessler D."/>
            <person name="Leibrecht I."/>
            <person name="Knappe J."/>
        </authorList>
    </citation>
    <scope>NUCLEOTIDE SEQUENCE [GENOMIC DNA]</scope>
    <scope>PROTEIN SEQUENCE OF 2-7</scope>
    <scope>FUNCTION</scope>
    <scope>CATALYTIC ACTIVITY</scope>
    <scope>COFACTOR</scope>
    <source>
        <strain>K12</strain>
    </source>
</reference>
<reference key="3">
    <citation type="journal article" date="1996" name="DNA Res.">
        <title>A 718-kb DNA sequence of the Escherichia coli K-12 genome corresponding to the 12.7-28.0 min region on the linkage map.</title>
        <authorList>
            <person name="Oshima T."/>
            <person name="Aiba H."/>
            <person name="Baba T."/>
            <person name="Fujita K."/>
            <person name="Hayashi K."/>
            <person name="Honjo A."/>
            <person name="Ikemoto K."/>
            <person name="Inada T."/>
            <person name="Itoh T."/>
            <person name="Kajihara M."/>
            <person name="Kanai K."/>
            <person name="Kashimoto K."/>
            <person name="Kimura S."/>
            <person name="Kitagawa M."/>
            <person name="Makino K."/>
            <person name="Masuda S."/>
            <person name="Miki T."/>
            <person name="Mizobuchi K."/>
            <person name="Mori H."/>
            <person name="Motomura K."/>
            <person name="Nakamura Y."/>
            <person name="Nashimoto H."/>
            <person name="Nishio Y."/>
            <person name="Saito N."/>
            <person name="Sampei G."/>
            <person name="Seki Y."/>
            <person name="Tagami H."/>
            <person name="Takemoto K."/>
            <person name="Wada C."/>
            <person name="Yamamoto Y."/>
            <person name="Yano M."/>
            <person name="Horiuchi T."/>
        </authorList>
    </citation>
    <scope>NUCLEOTIDE SEQUENCE [LARGE SCALE GENOMIC DNA]</scope>
    <source>
        <strain>K12 / W3110 / ATCC 27325 / DSM 5911</strain>
    </source>
</reference>
<reference key="4">
    <citation type="journal article" date="1997" name="Science">
        <title>The complete genome sequence of Escherichia coli K-12.</title>
        <authorList>
            <person name="Blattner F.R."/>
            <person name="Plunkett G. III"/>
            <person name="Bloch C.A."/>
            <person name="Perna N.T."/>
            <person name="Burland V."/>
            <person name="Riley M."/>
            <person name="Collado-Vides J."/>
            <person name="Glasner J.D."/>
            <person name="Rode C.K."/>
            <person name="Mayhew G.F."/>
            <person name="Gregor J."/>
            <person name="Davis N.W."/>
            <person name="Kirkpatrick H.A."/>
            <person name="Goeden M.A."/>
            <person name="Rose D.J."/>
            <person name="Mau B."/>
            <person name="Shao Y."/>
        </authorList>
    </citation>
    <scope>NUCLEOTIDE SEQUENCE [LARGE SCALE GENOMIC DNA]</scope>
    <source>
        <strain>K12 / MG1655 / ATCC 47076</strain>
    </source>
</reference>
<reference key="5">
    <citation type="journal article" date="2006" name="Mol. Syst. Biol.">
        <title>Highly accurate genome sequences of Escherichia coli K-12 strains MG1655 and W3110.</title>
        <authorList>
            <person name="Hayashi K."/>
            <person name="Morooka N."/>
            <person name="Yamamoto Y."/>
            <person name="Fujita K."/>
            <person name="Isono K."/>
            <person name="Choi S."/>
            <person name="Ohtsubo E."/>
            <person name="Baba T."/>
            <person name="Wanner B.L."/>
            <person name="Mori H."/>
            <person name="Horiuchi T."/>
        </authorList>
    </citation>
    <scope>NUCLEOTIDE SEQUENCE [LARGE SCALE GENOMIC DNA]</scope>
    <source>
        <strain>K12 / W3110 / ATCC 27325 / DSM 5911</strain>
    </source>
</reference>
<reference key="6">
    <citation type="journal article" date="1995" name="Microbiology">
        <title>Filling the gap between hns and adhE in Escherichia coli K12.</title>
        <authorList>
            <person name="Danchin A."/>
            <person name="Krin E."/>
        </authorList>
    </citation>
    <scope>NUCLEOTIDE SEQUENCE [GENOMIC DNA] OF 849-891</scope>
    <source>
        <strain>K12</strain>
    </source>
</reference>
<reference key="7">
    <citation type="journal article" date="1994" name="Microbiol. Immunol.">
        <title>Monoclonal antibodies to spirosin of Yersinia enterocolitica and analysis of the localization of spirosome by use of them.</title>
        <authorList>
            <person name="Yamato M."/>
            <person name="Takahashi Y."/>
            <person name="Tomotake H."/>
            <person name="Ota F."/>
            <person name="Hirota K."/>
            <person name="Yamaguchi K."/>
        </authorList>
    </citation>
    <scope>PROTEIN SEQUENCE OF 2-21</scope>
</reference>
<reference key="8">
    <citation type="journal article" date="1992" name="J. Biol. Chem.">
        <title>Ultrastructure and pyruvate formate-lyase radical quenching property of the multienzymic AdhE protein of Escherichia coli.</title>
        <authorList>
            <person name="Kessler D."/>
            <person name="Herth W."/>
            <person name="Knappe J."/>
        </authorList>
    </citation>
    <scope>PROTEIN SEQUENCE OF 2-6 AND 764-768</scope>
    <scope>PROPOSED FUNCTION AS A PFL DEACTIVASE</scope>
    <scope>COFACTOR</scope>
    <scope>SUBUNIT</scope>
    <source>
        <strain>K12</strain>
    </source>
</reference>
<reference key="9">
    <citation type="journal article" date="1982" name="J. Bacteriol.">
        <title>Escherichia coli mutants with a temperature-sensitive alcohol dehydrogenase.</title>
        <authorList>
            <person name="Lorowitz W."/>
            <person name="Clark D."/>
        </authorList>
    </citation>
    <scope>FUNCTION</scope>
    <scope>DISRUPTION PHENOTYPE</scope>
</reference>
<reference key="10">
    <citation type="journal article" date="1997" name="Electrophoresis">
        <title>Escherichia coli proteome analysis using the gene-protein database.</title>
        <authorList>
            <person name="VanBogelen R.A."/>
            <person name="Abshire K.Z."/>
            <person name="Moldover B."/>
            <person name="Olson E.R."/>
            <person name="Neidhardt F.C."/>
        </authorList>
    </citation>
    <scope>IDENTIFICATION BY 2D-GEL</scope>
</reference>
<reference key="11">
    <citation type="journal article" date="1999" name="J. Bacteriol.">
        <title>Regulation of expression of the adhE gene, encoding ethanol oxidoreductase in Escherichia coli: transcription from a downstream promoter and regulation by fnr and RpoS.</title>
        <authorList>
            <person name="Membrillo-Hernandez J."/>
            <person name="Lin E.C."/>
        </authorList>
    </citation>
    <scope>TRANSCRIPTIONAL REGULATION</scope>
</reference>
<reference key="12">
    <citation type="journal article" date="2000" name="FEMS Microbiol. Lett.">
        <title>Acetaldehyde dehydrogenase activity of the AdhE protein of Escherichia coli is inhibited by intermediates in ubiquinone synthesis.</title>
        <authorList>
            <person name="Gupta S."/>
            <person name="Mat-Jan F."/>
            <person name="Latifi M."/>
            <person name="Clark D.P."/>
        </authorList>
    </citation>
    <scope>FUNCTION</scope>
    <scope>CATALYTIC ACTIVITY</scope>
    <scope>ACTIVITY REGULATION</scope>
    <source>
        <strain>K12</strain>
    </source>
</reference>
<reference key="13">
    <citation type="journal article" date="2000" name="J. Biol. Chem.">
        <title>Evolution of the adhE gene product of Escherichia coli from a functional reductase to a dehydrogenase. Genetic and biochemical studies of the mutant proteins.</title>
        <authorList>
            <person name="Membrillo-Hernandez J."/>
            <person name="Echave P."/>
            <person name="Cabiscol E."/>
            <person name="Tamarit J."/>
            <person name="Ros J."/>
            <person name="Lin E.C."/>
        </authorList>
    </citation>
    <scope>FUNCTION</scope>
    <scope>CATALYTIC ACTIVITY</scope>
    <scope>BIOPHYSICOCHEMICAL PROPERTIES</scope>
    <scope>MUTAGENESIS OF ALA-267 AND GLU-568</scope>
</reference>
<reference key="14">
    <citation type="journal article" date="2002" name="Proc. Natl. Acad. Sci. U.S.A.">
        <title>DnaK dependence of mutant ethanol oxidoreductases evolved for aerobic function and protective role of the chaperone against protein oxidative damage in Escherichia coli.</title>
        <authorList>
            <person name="Echave P."/>
            <person name="Esparza-Ceron M.A."/>
            <person name="Cabiscol E."/>
            <person name="Tamarit J."/>
            <person name="Ros J."/>
            <person name="Membrillo-Hernandez J."/>
            <person name="Lin E.C."/>
        </authorList>
    </citation>
    <scope>ACTIVITY REGULATION</scope>
</reference>
<reference key="15">
    <citation type="journal article" date="2003" name="J. Biol. Chem.">
        <title>Novel antioxidant role of alcohol dehydrogenase E from Escherichia coli.</title>
        <authorList>
            <person name="Echave P."/>
            <person name="Tamarit J."/>
            <person name="Cabiscol E."/>
            <person name="Ros J."/>
        </authorList>
    </citation>
    <scope>FUNCTION AS AN ANTIOXIDANT</scope>
    <scope>DISRUPTION PHENOTYPE</scope>
    <source>
        <strain>K12 / MC4100 / ATCC 35695 / DSM 6574</strain>
    </source>
</reference>
<reference key="16">
    <citation type="journal article" date="2007" name="Arch. Biochem. Biophys.">
        <title>Inactivation of E. coli pyruvate formate-lyase: role of AdhE and small molecules.</title>
        <authorList>
            <person name="Nnyepi M.R."/>
            <person name="Peng Y."/>
            <person name="Broderick J.B."/>
        </authorList>
    </citation>
    <scope>FUNCTION</scope>
    <scope>CATALYTIC ACTIVITY</scope>
    <scope>LACK OF PFL DEACTIVASE ACTIVITY</scope>
</reference>
<reference key="17">
    <citation type="journal article" date="2009" name="Mol. Cell. Proteomics">
        <title>Lysine acetylation is a highly abundant and evolutionarily conserved modification in Escherichia coli.</title>
        <authorList>
            <person name="Zhang J."/>
            <person name="Sprung R."/>
            <person name="Pei J."/>
            <person name="Tan X."/>
            <person name="Kim S."/>
            <person name="Zhu H."/>
            <person name="Liu C.F."/>
            <person name="Grishin N.V."/>
            <person name="Zhao Y."/>
        </authorList>
    </citation>
    <scope>ACETYLATION [LARGE SCALE ANALYSIS] AT LYS-358</scope>
    <scope>IDENTIFICATION BY MASS SPECTROMETRY</scope>
    <source>
        <strain>K12 / JW1106</strain>
        <strain>K12 / MG1655 / ATCC 47076</strain>
    </source>
</reference>
<reference key="18">
    <citation type="journal article" date="2009" name="Acta Biochim. Pol.">
        <title>Role of Escherichia coli heat shock proteins IbpA and IbpB in protection of alcohol dehydrogenase AdhE against heat inactivation in the presence of oxygen.</title>
        <authorList>
            <person name="Matuszewska E."/>
            <person name="Kwiatkowska J."/>
            <person name="Ratajczak E."/>
            <person name="Kuczynska-Wisnik D."/>
            <person name="Laskowska E."/>
        </authorList>
    </citation>
    <scope>ACTIVITY REGULATION</scope>
    <source>
        <strain>K12 / MC4100 / ATCC 35695 / DSM 6574</strain>
    </source>
</reference>
<reference evidence="25" key="19">
    <citation type="journal article" date="2019" name="Nat. Commun.">
        <title>Aldehyde-alcohol dehydrogenase forms a high-order spirosome architecture critical for its activity.</title>
        <authorList>
            <person name="Kim G."/>
            <person name="Azmi L."/>
            <person name="Jang S."/>
            <person name="Jung T."/>
            <person name="Hebert H."/>
            <person name="Roe A.J."/>
            <person name="Byron O."/>
            <person name="Song J.J."/>
        </authorList>
    </citation>
    <scope>STRUCTURE BY ELECTRON MICROSCOPY (3.45 ANGSTROMS) OF COMPACT SPIROSOME</scope>
    <scope>ACTIVITY REGULATION</scope>
    <scope>SUBUNIT</scope>
    <scope>DOMAIN</scope>
    <scope>MUTAGENESIS OF PHE-670</scope>
    <source>
        <strain>K12</strain>
    </source>
</reference>
<reference evidence="26 27" key="20">
    <citation type="journal article" date="2020" name="Nat. Commun.">
        <title>Filamentation of the bacterial bi-functional alcohol/aldehyde dehydrogenase AdhE is essential for substrate channeling and enzymatic regulation.</title>
        <authorList>
            <person name="Pony P."/>
            <person name="Rapisarda C."/>
            <person name="Terradot L."/>
            <person name="Marza E."/>
            <person name="Fronzes R."/>
        </authorList>
    </citation>
    <scope>STRUCTURE BY ELECTRON MICROSCOPY (3.40 ANGSTROMS) OF EXTENDED SPIROSOME IN COMPLEXES WITH NAD AND IRON</scope>
    <scope>COFACTOR</scope>
    <scope>ACTIVITY REGULATION</scope>
    <scope>SUBUNIT</scope>
    <scope>DOMAIN</scope>
    <scope>MUTAGENESIS OF 446-LYS--GLU-449</scope>
    <source>
        <strain>K12</strain>
    </source>
</reference>
<reference evidence="28" key="21">
    <citation type="journal article" date="2020" name="Commun. Biol.">
        <title>Aldehyde-alcohol dehydrogenase undergoes structural transition to form extended spirosomes for substrate channeling.</title>
        <authorList>
            <person name="Kim G."/>
            <person name="Yang J."/>
            <person name="Jang J."/>
            <person name="Choi J.S."/>
            <person name="Roe A.J."/>
            <person name="Byron O."/>
            <person name="Seok C."/>
            <person name="Song J.J."/>
        </authorList>
    </citation>
    <scope>STRUCTURE BY ELECTRON MICROSCOPY (3.45 ANGSTROMS) OF EXTENDED SPIROSOME IN COMPLEX WITH NAD AND ZINC</scope>
    <scope>ACTIVITY REGULATION</scope>
    <scope>SUBUNIT</scope>
    <source>
        <strain>K12</strain>
    </source>
</reference>
<organism>
    <name type="scientific">Escherichia coli (strain K12)</name>
    <dbReference type="NCBI Taxonomy" id="83333"/>
    <lineage>
        <taxon>Bacteria</taxon>
        <taxon>Pseudomonadati</taxon>
        <taxon>Pseudomonadota</taxon>
        <taxon>Gammaproteobacteria</taxon>
        <taxon>Enterobacterales</taxon>
        <taxon>Enterobacteriaceae</taxon>
        <taxon>Escherichia</taxon>
    </lineage>
</organism>
<keyword id="KW-0002">3D-structure</keyword>
<keyword id="KW-0007">Acetylation</keyword>
<keyword id="KW-0903">Direct protein sequencing</keyword>
<keyword id="KW-0408">Iron</keyword>
<keyword id="KW-0479">Metal-binding</keyword>
<keyword id="KW-0511">Multifunctional enzyme</keyword>
<keyword id="KW-0520">NAD</keyword>
<keyword id="KW-0560">Oxidoreductase</keyword>
<keyword id="KW-1185">Reference proteome</keyword>
<feature type="initiator methionine" description="Removed" evidence="11 12 17">
    <location>
        <position position="1"/>
    </location>
</feature>
<feature type="chain" id="PRO_0000087837" description="Bifunctional aldehyde-alcohol dehydrogenase AdhE">
    <location>
        <begin position="2"/>
        <end position="891"/>
    </location>
</feature>
<feature type="region of interest" description="Aldehyde dehydrogenase" evidence="21">
    <location>
        <begin position="2"/>
        <end position="440"/>
    </location>
</feature>
<feature type="region of interest" description="Linker" evidence="23">
    <location>
        <begin position="441"/>
        <end position="448"/>
    </location>
</feature>
<feature type="region of interest" description="Alcohol dehydrogenase" evidence="21">
    <location>
        <begin position="449"/>
        <end position="891"/>
    </location>
</feature>
<feature type="active site" description="Nucleophile" evidence="1">
    <location>
        <position position="246"/>
    </location>
</feature>
<feature type="binding site" evidence="15 28">
    <location>
        <begin position="110"/>
        <end position="115"/>
    </location>
    <ligand>
        <name>NAD(+)</name>
        <dbReference type="ChEBI" id="CHEBI:57540"/>
        <label>1</label>
    </ligand>
</feature>
<feature type="binding site" evidence="15 28">
    <location>
        <position position="195"/>
    </location>
    <ligand>
        <name>NAD(+)</name>
        <dbReference type="ChEBI" id="CHEBI:57540"/>
        <label>1</label>
    </ligand>
</feature>
<feature type="binding site" evidence="15 28">
    <location>
        <position position="213"/>
    </location>
    <ligand>
        <name>NAD(+)</name>
        <dbReference type="ChEBI" id="CHEBI:57540"/>
        <label>1</label>
    </ligand>
</feature>
<feature type="binding site" evidence="15 28">
    <location>
        <position position="335"/>
    </location>
    <ligand>
        <name>NAD(+)</name>
        <dbReference type="ChEBI" id="CHEBI:57540"/>
        <label>1</label>
    </ligand>
</feature>
<feature type="binding site" evidence="15 28">
    <location>
        <position position="419"/>
    </location>
    <ligand>
        <name>NAD(+)</name>
        <dbReference type="ChEBI" id="CHEBI:57540"/>
        <label>1</label>
    </ligand>
</feature>
<feature type="binding site" evidence="15 28">
    <location>
        <position position="487"/>
    </location>
    <ligand>
        <name>NAD(+)</name>
        <dbReference type="ChEBI" id="CHEBI:57540"/>
        <label>2</label>
    </ligand>
</feature>
<feature type="binding site" evidence="15 28">
    <location>
        <position position="519"/>
    </location>
    <ligand>
        <name>NAD(+)</name>
        <dbReference type="ChEBI" id="CHEBI:57540"/>
        <label>2</label>
    </ligand>
</feature>
<feature type="binding site" evidence="15 28">
    <location>
        <begin position="546"/>
        <end position="550"/>
    </location>
    <ligand>
        <name>NAD(+)</name>
        <dbReference type="ChEBI" id="CHEBI:57540"/>
        <label>2</label>
    </ligand>
</feature>
<feature type="binding site" evidence="15 28">
    <location>
        <position position="610"/>
    </location>
    <ligand>
        <name>NAD(+)</name>
        <dbReference type="ChEBI" id="CHEBI:57540"/>
        <label>2</label>
    </ligand>
</feature>
<feature type="binding site" evidence="15 28">
    <location>
        <position position="619"/>
    </location>
    <ligand>
        <name>NAD(+)</name>
        <dbReference type="ChEBI" id="CHEBI:57540"/>
        <label>2</label>
    </ligand>
</feature>
<feature type="binding site" evidence="14 24 26 27">
    <location>
        <position position="653"/>
    </location>
    <ligand>
        <name>Fe cation</name>
        <dbReference type="ChEBI" id="CHEBI:24875"/>
    </ligand>
</feature>
<feature type="binding site" evidence="14 24 26 27">
    <location>
        <position position="657"/>
    </location>
    <ligand>
        <name>Fe cation</name>
        <dbReference type="ChEBI" id="CHEBI:24875"/>
    </ligand>
</feature>
<feature type="binding site" evidence="14 24 26 27">
    <location>
        <position position="723"/>
    </location>
    <ligand>
        <name>Fe cation</name>
        <dbReference type="ChEBI" id="CHEBI:24875"/>
    </ligand>
</feature>
<feature type="binding site" evidence="14 24 26 27">
    <location>
        <position position="737"/>
    </location>
    <ligand>
        <name>Fe cation</name>
        <dbReference type="ChEBI" id="CHEBI:24875"/>
    </ligand>
</feature>
<feature type="modified residue" description="N6-acetyllysine" evidence="9">
    <location>
        <position position="358"/>
    </location>
</feature>
<feature type="mutagenesis site" description="Shows aerobic growth ability on ethanol. Shows 5-6 fold increase in acetaldehyde dehydrogenase activity, but does not affect ethanol dehydrogenase activity. Shows decreased thermal enzyme stability and increased sensitivity to MCO damage. Shows increased protein stability and resistance to MCO; when associated with K-568." evidence="4">
    <original>A</original>
    <variation>T</variation>
    <location>
        <position position="267"/>
    </location>
</feature>
<feature type="mutagenesis site" description="Can form dimers, but does not assemble into long filaments. Strongly affects ALDH activity, but not ADH activity." evidence="14">
    <location>
        <begin position="446"/>
        <end position="449"/>
    </location>
</feature>
<feature type="mutagenesis site" description="Partially restores protein stability and resistance to MCO damage; when associated with T-267." evidence="4">
    <original>E</original>
    <variation>K</variation>
    <location>
        <position position="568"/>
    </location>
</feature>
<feature type="mutagenesis site" description="Disrupts spirosome formation. Affects the forward activity of ALDH." evidence="13">
    <original>F</original>
    <variation>A</variation>
    <variation>E</variation>
    <variation>V</variation>
    <location>
        <position position="670"/>
    </location>
</feature>
<feature type="helix" evidence="30">
    <location>
        <begin position="6"/>
        <end position="23"/>
    </location>
</feature>
<feature type="helix" evidence="30">
    <location>
        <begin position="29"/>
        <end position="43"/>
    </location>
</feature>
<feature type="helix" evidence="30">
    <location>
        <begin position="46"/>
        <end position="57"/>
    </location>
</feature>
<feature type="helix" evidence="30">
    <location>
        <begin position="62"/>
        <end position="80"/>
    </location>
</feature>
<feature type="strand" evidence="30">
    <location>
        <begin position="90"/>
        <end position="92"/>
    </location>
</feature>
<feature type="turn" evidence="30">
    <location>
        <begin position="93"/>
        <end position="96"/>
    </location>
</feature>
<feature type="strand" evidence="30">
    <location>
        <begin position="97"/>
        <end position="99"/>
    </location>
</feature>
<feature type="strand" evidence="30">
    <location>
        <begin position="108"/>
        <end position="110"/>
    </location>
</feature>
<feature type="strand" evidence="30">
    <location>
        <begin position="113"/>
        <end position="115"/>
    </location>
</feature>
<feature type="helix" evidence="30">
    <location>
        <begin position="118"/>
        <end position="129"/>
    </location>
</feature>
<feature type="strand" evidence="30">
    <location>
        <begin position="134"/>
        <end position="137"/>
    </location>
</feature>
<feature type="helix" evidence="30">
    <location>
        <begin position="140"/>
        <end position="142"/>
    </location>
</feature>
<feature type="helix" evidence="30">
    <location>
        <begin position="143"/>
        <end position="157"/>
    </location>
</feature>
<feature type="helix" evidence="30">
    <location>
        <begin position="158"/>
        <end position="160"/>
    </location>
</feature>
<feature type="strand" evidence="30">
    <location>
        <begin position="164"/>
        <end position="169"/>
    </location>
</feature>
<feature type="helix" evidence="30">
    <location>
        <begin position="175"/>
        <end position="181"/>
    </location>
</feature>
<feature type="strand" evidence="29">
    <location>
        <begin position="189"/>
        <end position="195"/>
    </location>
</feature>
<feature type="turn" evidence="30">
    <location>
        <begin position="196"/>
        <end position="198"/>
    </location>
</feature>
<feature type="helix" evidence="30">
    <location>
        <begin position="199"/>
        <end position="202"/>
    </location>
</feature>
<feature type="helix" evidence="30">
    <location>
        <begin position="203"/>
        <end position="205"/>
    </location>
</feature>
<feature type="strand" evidence="29">
    <location>
        <begin position="209"/>
        <end position="212"/>
    </location>
</feature>
<feature type="strand" evidence="30">
    <location>
        <begin position="218"/>
        <end position="221"/>
    </location>
</feature>
<feature type="strand" evidence="30">
    <location>
        <begin position="223"/>
        <end position="225"/>
    </location>
</feature>
<feature type="helix" evidence="30">
    <location>
        <begin position="227"/>
        <end position="238"/>
    </location>
</feature>
<feature type="helix" evidence="30">
    <location>
        <begin position="240"/>
        <end position="243"/>
    </location>
</feature>
<feature type="strand" evidence="31">
    <location>
        <begin position="245"/>
        <end position="247"/>
    </location>
</feature>
<feature type="strand" evidence="30">
    <location>
        <begin position="251"/>
        <end position="255"/>
    </location>
</feature>
<feature type="helix" evidence="30">
    <location>
        <begin position="256"/>
        <end position="268"/>
    </location>
</feature>
<feature type="strand" evidence="30">
    <location>
        <begin position="271"/>
        <end position="274"/>
    </location>
</feature>
<feature type="helix" evidence="30">
    <location>
        <begin position="277"/>
        <end position="285"/>
    </location>
</feature>
<feature type="strand" evidence="30">
    <location>
        <begin position="286"/>
        <end position="288"/>
    </location>
</feature>
<feature type="turn" evidence="30">
    <location>
        <begin position="294"/>
        <end position="298"/>
    </location>
</feature>
<feature type="helix" evidence="30">
    <location>
        <begin position="301"/>
        <end position="308"/>
    </location>
</feature>
<feature type="strand" evidence="30">
    <location>
        <begin position="318"/>
        <end position="322"/>
    </location>
</feature>
<feature type="strand" evidence="31">
    <location>
        <begin position="327"/>
        <end position="329"/>
    </location>
</feature>
<feature type="helix" evidence="30">
    <location>
        <begin position="331"/>
        <end position="333"/>
    </location>
</feature>
<feature type="strand" evidence="30">
    <location>
        <begin position="338"/>
        <end position="348"/>
    </location>
</feature>
<feature type="helix" evidence="30">
    <location>
        <begin position="349"/>
        <end position="363"/>
    </location>
</feature>
<feature type="strand" evidence="29">
    <location>
        <begin position="364"/>
        <end position="366"/>
    </location>
</feature>
<feature type="strand" evidence="30">
    <location>
        <begin position="369"/>
        <end position="373"/>
    </location>
</feature>
<feature type="turn" evidence="30">
    <location>
        <begin position="375"/>
        <end position="377"/>
    </location>
</feature>
<feature type="helix" evidence="30">
    <location>
        <begin position="379"/>
        <end position="386"/>
    </location>
</feature>
<feature type="strand" evidence="30">
    <location>
        <begin position="391"/>
        <end position="398"/>
    </location>
</feature>
<feature type="turn" evidence="30">
    <location>
        <begin position="401"/>
        <end position="403"/>
    </location>
</feature>
<feature type="strand" evidence="30">
    <location>
        <begin position="407"/>
        <end position="409"/>
    </location>
</feature>
<feature type="strand" evidence="30">
    <location>
        <begin position="411"/>
        <end position="413"/>
    </location>
</feature>
<feature type="strand" evidence="30">
    <location>
        <begin position="417"/>
        <end position="419"/>
    </location>
</feature>
<feature type="helix" evidence="30">
    <location>
        <begin position="422"/>
        <end position="425"/>
    </location>
</feature>
<feature type="helix" evidence="30">
    <location>
        <begin position="435"/>
        <end position="437"/>
    </location>
</feature>
<feature type="strand" evidence="30">
    <location>
        <begin position="438"/>
        <end position="440"/>
    </location>
</feature>
<feature type="strand" evidence="30">
    <location>
        <begin position="443"/>
        <end position="446"/>
    </location>
</feature>
<feature type="strand" evidence="30">
    <location>
        <begin position="461"/>
        <end position="465"/>
    </location>
</feature>
<feature type="helix" evidence="30">
    <location>
        <begin position="467"/>
        <end position="474"/>
    </location>
</feature>
<feature type="strand" evidence="30">
    <location>
        <begin position="476"/>
        <end position="478"/>
    </location>
</feature>
<feature type="strand" evidence="30">
    <location>
        <begin position="484"/>
        <end position="487"/>
    </location>
</feature>
<feature type="helix" evidence="30">
    <location>
        <begin position="488"/>
        <end position="492"/>
    </location>
</feature>
<feature type="turn" evidence="30">
    <location>
        <begin position="493"/>
        <end position="496"/>
    </location>
</feature>
<feature type="helix" evidence="30">
    <location>
        <begin position="497"/>
        <end position="503"/>
    </location>
</feature>
<feature type="strand" evidence="30">
    <location>
        <begin position="512"/>
        <end position="516"/>
    </location>
</feature>
<feature type="helix" evidence="30">
    <location>
        <begin position="522"/>
        <end position="535"/>
    </location>
</feature>
<feature type="strand" evidence="31">
    <location>
        <begin position="538"/>
        <end position="542"/>
    </location>
</feature>
<feature type="strand" evidence="30">
    <location>
        <begin position="544"/>
        <end position="546"/>
    </location>
</feature>
<feature type="helix" evidence="30">
    <location>
        <begin position="547"/>
        <end position="560"/>
    </location>
</feature>
<feature type="helix" evidence="30">
    <location>
        <begin position="566"/>
        <end position="569"/>
    </location>
</feature>
<feature type="strand" evidence="30">
    <location>
        <begin position="576"/>
        <end position="578"/>
    </location>
</feature>
<feature type="strand" evidence="29">
    <location>
        <begin position="591"/>
        <end position="596"/>
    </location>
</feature>
<feature type="strand" evidence="31">
    <location>
        <begin position="598"/>
        <end position="600"/>
    </location>
</feature>
<feature type="turn" evidence="30">
    <location>
        <begin position="603"/>
        <end position="605"/>
    </location>
</feature>
<feature type="strand" evidence="29">
    <location>
        <begin position="608"/>
        <end position="612"/>
    </location>
</feature>
<feature type="strand" evidence="30">
    <location>
        <begin position="614"/>
        <end position="616"/>
    </location>
</feature>
<feature type="strand" evidence="29">
    <location>
        <begin position="619"/>
        <end position="623"/>
    </location>
</feature>
<feature type="helix" evidence="30">
    <location>
        <begin position="625"/>
        <end position="627"/>
    </location>
</feature>
<feature type="strand" evidence="30">
    <location>
        <begin position="630"/>
        <end position="634"/>
    </location>
</feature>
<feature type="helix" evidence="30">
    <location>
        <begin position="636"/>
        <end position="638"/>
    </location>
</feature>
<feature type="turn" evidence="30">
    <location>
        <begin position="639"/>
        <end position="641"/>
    </location>
</feature>
<feature type="helix" evidence="30">
    <location>
        <begin position="644"/>
        <end position="662"/>
    </location>
</feature>
<feature type="strand" evidence="30">
    <location>
        <begin position="663"/>
        <end position="666"/>
    </location>
</feature>
<feature type="strand" evidence="30">
    <location>
        <begin position="669"/>
        <end position="671"/>
    </location>
</feature>
<feature type="helix" evidence="30">
    <location>
        <begin position="672"/>
        <end position="679"/>
    </location>
</feature>
<feature type="turn" evidence="30">
    <location>
        <begin position="680"/>
        <end position="684"/>
    </location>
</feature>
<feature type="helix" evidence="30">
    <location>
        <begin position="686"/>
        <end position="691"/>
    </location>
</feature>
<feature type="helix" evidence="30">
    <location>
        <begin position="693"/>
        <end position="695"/>
    </location>
</feature>
<feature type="helix" evidence="30">
    <location>
        <begin position="697"/>
        <end position="714"/>
    </location>
</feature>
<feature type="helix" evidence="30">
    <location>
        <begin position="722"/>
        <end position="729"/>
    </location>
</feature>
<feature type="helix" evidence="30">
    <location>
        <begin position="737"/>
        <end position="752"/>
    </location>
</feature>
<feature type="strand" evidence="31">
    <location>
        <begin position="758"/>
        <end position="760"/>
    </location>
</feature>
<feature type="turn" evidence="29">
    <location>
        <begin position="764"/>
        <end position="766"/>
    </location>
</feature>
<feature type="helix" evidence="30">
    <location>
        <begin position="771"/>
        <end position="774"/>
    </location>
</feature>
<feature type="helix" evidence="30">
    <location>
        <begin position="776"/>
        <end position="782"/>
    </location>
</feature>
<feature type="helix" evidence="30">
    <location>
        <begin position="793"/>
        <end position="807"/>
    </location>
</feature>
<feature type="turn" evidence="30">
    <location>
        <begin position="808"/>
        <end position="810"/>
    </location>
</feature>
<feature type="strand" evidence="30">
    <location>
        <begin position="813"/>
        <end position="815"/>
    </location>
</feature>
<feature type="helix" evidence="30">
    <location>
        <begin position="816"/>
        <end position="818"/>
    </location>
</feature>
<feature type="helix" evidence="30">
    <location>
        <begin position="822"/>
        <end position="825"/>
    </location>
</feature>
<feature type="turn" evidence="30">
    <location>
        <begin position="826"/>
        <end position="828"/>
    </location>
</feature>
<feature type="helix" evidence="30">
    <location>
        <begin position="830"/>
        <end position="837"/>
    </location>
</feature>
<feature type="strand" evidence="30">
    <location>
        <begin position="839"/>
        <end position="841"/>
    </location>
</feature>
<feature type="helix" evidence="30">
    <location>
        <begin position="842"/>
        <end position="844"/>
    </location>
</feature>
<feature type="strand" evidence="31">
    <location>
        <begin position="845"/>
        <end position="847"/>
    </location>
</feature>
<feature type="helix" evidence="30">
    <location>
        <begin position="851"/>
        <end position="854"/>
    </location>
</feature>
<feature type="helix" evidence="30">
    <location>
        <begin position="856"/>
        <end position="862"/>
    </location>
</feature>
<evidence type="ECO:0000250" key="1">
    <source>
        <dbReference type="UniProtKB" id="Q9HTJ1"/>
    </source>
</evidence>
<evidence type="ECO:0000269" key="2">
    <source>
    </source>
</evidence>
<evidence type="ECO:0000269" key="3">
    <source>
    </source>
</evidence>
<evidence type="ECO:0000269" key="4">
    <source>
    </source>
</evidence>
<evidence type="ECO:0000269" key="5">
    <source>
    </source>
</evidence>
<evidence type="ECO:0000269" key="6">
    <source>
    </source>
</evidence>
<evidence type="ECO:0000269" key="7">
    <source>
    </source>
</evidence>
<evidence type="ECO:0000269" key="8">
    <source>
    </source>
</evidence>
<evidence type="ECO:0000269" key="9">
    <source>
    </source>
</evidence>
<evidence type="ECO:0000269" key="10">
    <source>
    </source>
</evidence>
<evidence type="ECO:0000269" key="11">
    <source>
    </source>
</evidence>
<evidence type="ECO:0000269" key="12">
    <source>
    </source>
</evidence>
<evidence type="ECO:0000269" key="13">
    <source>
    </source>
</evidence>
<evidence type="ECO:0000269" key="14">
    <source>
    </source>
</evidence>
<evidence type="ECO:0000269" key="15">
    <source>
    </source>
</evidence>
<evidence type="ECO:0000269" key="16">
    <source>
    </source>
</evidence>
<evidence type="ECO:0000269" key="17">
    <source>
    </source>
</evidence>
<evidence type="ECO:0000303" key="18">
    <source>
    </source>
</evidence>
<evidence type="ECO:0000303" key="19">
    <source>
    </source>
</evidence>
<evidence type="ECO:0000303" key="20">
    <source>
    </source>
</evidence>
<evidence type="ECO:0000305" key="21"/>
<evidence type="ECO:0000305" key="22">
    <source>
    </source>
</evidence>
<evidence type="ECO:0000305" key="23">
    <source>
    </source>
</evidence>
<evidence type="ECO:0000305" key="24">
    <source>
    </source>
</evidence>
<evidence type="ECO:0007744" key="25">
    <source>
        <dbReference type="PDB" id="6AHC"/>
    </source>
</evidence>
<evidence type="ECO:0007744" key="26">
    <source>
        <dbReference type="PDB" id="6TQH"/>
    </source>
</evidence>
<evidence type="ECO:0007744" key="27">
    <source>
        <dbReference type="PDB" id="6TQM"/>
    </source>
</evidence>
<evidence type="ECO:0007744" key="28">
    <source>
        <dbReference type="PDB" id="7BVP"/>
    </source>
</evidence>
<evidence type="ECO:0007829" key="29">
    <source>
        <dbReference type="PDB" id="6AHC"/>
    </source>
</evidence>
<evidence type="ECO:0007829" key="30">
    <source>
        <dbReference type="PDB" id="6TQH"/>
    </source>
</evidence>
<evidence type="ECO:0007829" key="31">
    <source>
        <dbReference type="PDB" id="7BVP"/>
    </source>
</evidence>
<dbReference type="EC" id="1.2.1.10" evidence="3 4 8 11"/>
<dbReference type="EC" id="1.1.1.1" evidence="4 8 11"/>
<dbReference type="EMBL" id="X59263">
    <property type="protein sequence ID" value="CAA41955.1"/>
    <property type="molecule type" value="Genomic_DNA"/>
</dbReference>
<dbReference type="EMBL" id="M33504">
    <property type="protein sequence ID" value="AAA23420.1"/>
    <property type="molecule type" value="Genomic_DNA"/>
</dbReference>
<dbReference type="EMBL" id="U00096">
    <property type="protein sequence ID" value="AAC74323.1"/>
    <property type="molecule type" value="Genomic_DNA"/>
</dbReference>
<dbReference type="EMBL" id="AP009048">
    <property type="protein sequence ID" value="BAA36121.1"/>
    <property type="molecule type" value="Genomic_DNA"/>
</dbReference>
<dbReference type="EMBL" id="X67326">
    <property type="protein sequence ID" value="CAA47743.1"/>
    <property type="molecule type" value="Genomic_DNA"/>
</dbReference>
<dbReference type="PIR" id="JS0406">
    <property type="entry name" value="DEEC"/>
</dbReference>
<dbReference type="RefSeq" id="NP_415757.1">
    <property type="nucleotide sequence ID" value="NC_000913.3"/>
</dbReference>
<dbReference type="RefSeq" id="WP_000301651.1">
    <property type="nucleotide sequence ID" value="NZ_STEB01000005.1"/>
</dbReference>
<dbReference type="PDB" id="6AHC">
    <property type="method" value="EM"/>
    <property type="resolution" value="3.45 A"/>
    <property type="chains" value="A/B/C/D/E/F/G/H=1-891"/>
</dbReference>
<dbReference type="PDB" id="6TQH">
    <property type="method" value="EM"/>
    <property type="resolution" value="3.40 A"/>
    <property type="chains" value="A/B/C/F=1-891"/>
</dbReference>
<dbReference type="PDB" id="6TQM">
    <property type="method" value="EM"/>
    <property type="resolution" value="3.80 A"/>
    <property type="chains" value="A/B/C/F=1-891"/>
</dbReference>
<dbReference type="PDB" id="7BVP">
    <property type="method" value="EM"/>
    <property type="resolution" value="3.45 A"/>
    <property type="chains" value="A/B/C/D/E/F=1-891"/>
</dbReference>
<dbReference type="PDBsum" id="6AHC"/>
<dbReference type="PDBsum" id="6TQH"/>
<dbReference type="PDBsum" id="6TQM"/>
<dbReference type="PDBsum" id="7BVP"/>
<dbReference type="EMDB" id="EMD-10551"/>
<dbReference type="EMDB" id="EMD-10555"/>
<dbReference type="EMDB" id="EMD-30220"/>
<dbReference type="EMDB" id="EMD-9623"/>
<dbReference type="SASBDB" id="P0A9Q7"/>
<dbReference type="SMR" id="P0A9Q7"/>
<dbReference type="BioGRID" id="4259605">
    <property type="interactions" value="19"/>
</dbReference>
<dbReference type="BioGRID" id="850204">
    <property type="interactions" value="1"/>
</dbReference>
<dbReference type="DIP" id="DIP-35790N"/>
<dbReference type="FunCoup" id="P0A9Q7">
    <property type="interactions" value="336"/>
</dbReference>
<dbReference type="IntAct" id="P0A9Q7">
    <property type="interactions" value="21"/>
</dbReference>
<dbReference type="MINT" id="P0A9Q7"/>
<dbReference type="STRING" id="511145.b1241"/>
<dbReference type="MoonProt" id="P0A9Q7"/>
<dbReference type="iPTMnet" id="P0A9Q7"/>
<dbReference type="jPOST" id="P0A9Q7"/>
<dbReference type="PaxDb" id="511145-b1241"/>
<dbReference type="EnsemblBacteria" id="AAC74323">
    <property type="protein sequence ID" value="AAC74323"/>
    <property type="gene ID" value="b1241"/>
</dbReference>
<dbReference type="GeneID" id="93775306"/>
<dbReference type="GeneID" id="945837"/>
<dbReference type="KEGG" id="ecj:JW1228"/>
<dbReference type="KEGG" id="eco:b1241"/>
<dbReference type="KEGG" id="ecoc:C3026_07295"/>
<dbReference type="PATRIC" id="fig|1411691.4.peg.1043"/>
<dbReference type="EchoBASE" id="EB0030"/>
<dbReference type="eggNOG" id="COG1012">
    <property type="taxonomic scope" value="Bacteria"/>
</dbReference>
<dbReference type="eggNOG" id="COG1454">
    <property type="taxonomic scope" value="Bacteria"/>
</dbReference>
<dbReference type="HOGENOM" id="CLU_007207_2_2_6"/>
<dbReference type="InParanoid" id="P0A9Q7"/>
<dbReference type="OMA" id="KIMWVLY"/>
<dbReference type="OrthoDB" id="9815791at2"/>
<dbReference type="PhylomeDB" id="P0A9Q7"/>
<dbReference type="BioCyc" id="EcoCyc:ADHE-MONOMER"/>
<dbReference type="BioCyc" id="MetaCyc:ADHE-MONOMER"/>
<dbReference type="PRO" id="PR:P0A9Q7"/>
<dbReference type="Proteomes" id="UP000000625">
    <property type="component" value="Chromosome"/>
</dbReference>
<dbReference type="GO" id="GO:0005829">
    <property type="term" value="C:cytosol"/>
    <property type="evidence" value="ECO:0000314"/>
    <property type="project" value="EcoCyc"/>
</dbReference>
<dbReference type="GO" id="GO:0016020">
    <property type="term" value="C:membrane"/>
    <property type="evidence" value="ECO:0007005"/>
    <property type="project" value="UniProtKB"/>
</dbReference>
<dbReference type="GO" id="GO:0008774">
    <property type="term" value="F:acetaldehyde dehydrogenase (acetylating) activity"/>
    <property type="evidence" value="ECO:0000314"/>
    <property type="project" value="EcoCyc"/>
</dbReference>
<dbReference type="GO" id="GO:0004022">
    <property type="term" value="F:alcohol dehydrogenase (NAD+) activity"/>
    <property type="evidence" value="ECO:0000315"/>
    <property type="project" value="EcoliWiki"/>
</dbReference>
<dbReference type="GO" id="GO:0120542">
    <property type="term" value="F:ethanol dehydrogenase (NAD+) activity"/>
    <property type="evidence" value="ECO:0007669"/>
    <property type="project" value="RHEA"/>
</dbReference>
<dbReference type="GO" id="GO:0008198">
    <property type="term" value="F:ferrous iron binding"/>
    <property type="evidence" value="ECO:0000314"/>
    <property type="project" value="EcoCyc"/>
</dbReference>
<dbReference type="GO" id="GO:0042802">
    <property type="term" value="F:identical protein binding"/>
    <property type="evidence" value="ECO:0000353"/>
    <property type="project" value="IntAct"/>
</dbReference>
<dbReference type="GO" id="GO:0015976">
    <property type="term" value="P:carbon utilization"/>
    <property type="evidence" value="ECO:0007669"/>
    <property type="project" value="InterPro"/>
</dbReference>
<dbReference type="GO" id="GO:0006115">
    <property type="term" value="P:ethanol biosynthetic process"/>
    <property type="evidence" value="ECO:0000314"/>
    <property type="project" value="EcoliWiki"/>
</dbReference>
<dbReference type="GO" id="GO:0019664">
    <property type="term" value="P:mixed acid fermentation"/>
    <property type="evidence" value="ECO:0000315"/>
    <property type="project" value="EcoCyc"/>
</dbReference>
<dbReference type="GO" id="GO:0051260">
    <property type="term" value="P:protein homooligomerization"/>
    <property type="evidence" value="ECO:0000314"/>
    <property type="project" value="EcoCyc"/>
</dbReference>
<dbReference type="GO" id="GO:0006979">
    <property type="term" value="P:response to oxidative stress"/>
    <property type="evidence" value="ECO:0000315"/>
    <property type="project" value="EcoCyc"/>
</dbReference>
<dbReference type="CDD" id="cd08178">
    <property type="entry name" value="AAD_C"/>
    <property type="match status" value="1"/>
</dbReference>
<dbReference type="CDD" id="cd07081">
    <property type="entry name" value="ALDH_F20_ACDH_EutE-like"/>
    <property type="match status" value="1"/>
</dbReference>
<dbReference type="FunFam" id="1.20.1090.10:FF:000001">
    <property type="entry name" value="Aldehyde-alcohol dehydrogenase"/>
    <property type="match status" value="1"/>
</dbReference>
<dbReference type="FunFam" id="3.40.309.10:FF:000007">
    <property type="entry name" value="Aldehyde-alcohol dehydrogenase"/>
    <property type="match status" value="1"/>
</dbReference>
<dbReference type="FunFam" id="3.40.50.1970:FF:000002">
    <property type="entry name" value="Aldehyde-alcohol dehydrogenase"/>
    <property type="match status" value="1"/>
</dbReference>
<dbReference type="FunFam" id="3.40.605.10:FF:000008">
    <property type="entry name" value="Aldehyde-alcohol dehydrogenase"/>
    <property type="match status" value="1"/>
</dbReference>
<dbReference type="Gene3D" id="3.40.50.1970">
    <property type="match status" value="1"/>
</dbReference>
<dbReference type="Gene3D" id="3.40.605.10">
    <property type="entry name" value="Aldehyde Dehydrogenase, Chain A, domain 1"/>
    <property type="match status" value="1"/>
</dbReference>
<dbReference type="Gene3D" id="3.40.309.10">
    <property type="entry name" value="Aldehyde Dehydrogenase, Chain A, domain 2"/>
    <property type="match status" value="1"/>
</dbReference>
<dbReference type="Gene3D" id="1.20.1090.10">
    <property type="entry name" value="Dehydroquinate synthase-like - alpha domain"/>
    <property type="match status" value="1"/>
</dbReference>
<dbReference type="InterPro" id="IPR034789">
    <property type="entry name" value="AAD_C"/>
</dbReference>
<dbReference type="InterPro" id="IPR001670">
    <property type="entry name" value="ADH_Fe/GldA"/>
</dbReference>
<dbReference type="InterPro" id="IPR056798">
    <property type="entry name" value="ADH_Fe_C"/>
</dbReference>
<dbReference type="InterPro" id="IPR018211">
    <property type="entry name" value="ADH_Fe_CS"/>
</dbReference>
<dbReference type="InterPro" id="IPR039697">
    <property type="entry name" value="Alcohol_dehydrogenase_Fe"/>
</dbReference>
<dbReference type="InterPro" id="IPR016161">
    <property type="entry name" value="Ald_DH/histidinol_DH"/>
</dbReference>
<dbReference type="InterPro" id="IPR016163">
    <property type="entry name" value="Ald_DH_C"/>
</dbReference>
<dbReference type="InterPro" id="IPR016162">
    <property type="entry name" value="Ald_DH_N"/>
</dbReference>
<dbReference type="InterPro" id="IPR015590">
    <property type="entry name" value="Aldehyde_DH_dom"/>
</dbReference>
<dbReference type="InterPro" id="IPR012079">
    <property type="entry name" value="Bifunc_Ald-ADH"/>
</dbReference>
<dbReference type="NCBIfam" id="NF010378">
    <property type="entry name" value="PRK13805.1"/>
    <property type="match status" value="1"/>
</dbReference>
<dbReference type="PANTHER" id="PTHR11496">
    <property type="entry name" value="ALCOHOL DEHYDROGENASE"/>
    <property type="match status" value="1"/>
</dbReference>
<dbReference type="PANTHER" id="PTHR11496:SF83">
    <property type="entry name" value="HYDROXYACID-OXOACID TRANSHYDROGENASE, MITOCHONDRIAL"/>
    <property type="match status" value="1"/>
</dbReference>
<dbReference type="Pfam" id="PF25137">
    <property type="entry name" value="ADH_Fe_C"/>
    <property type="match status" value="1"/>
</dbReference>
<dbReference type="Pfam" id="PF00171">
    <property type="entry name" value="Aldedh"/>
    <property type="match status" value="1"/>
</dbReference>
<dbReference type="Pfam" id="PF00465">
    <property type="entry name" value="Fe-ADH"/>
    <property type="match status" value="1"/>
</dbReference>
<dbReference type="PIRSF" id="PIRSF000111">
    <property type="entry name" value="ALDH_ADH"/>
    <property type="match status" value="1"/>
</dbReference>
<dbReference type="SUPFAM" id="SSF53720">
    <property type="entry name" value="ALDH-like"/>
    <property type="match status" value="1"/>
</dbReference>
<dbReference type="SUPFAM" id="SSF56796">
    <property type="entry name" value="Dehydroquinate synthase-like"/>
    <property type="match status" value="1"/>
</dbReference>
<dbReference type="PROSITE" id="PS00913">
    <property type="entry name" value="ADH_IRON_1"/>
    <property type="match status" value="1"/>
</dbReference>
<dbReference type="PROSITE" id="PS00060">
    <property type="entry name" value="ADH_IRON_2"/>
    <property type="match status" value="1"/>
</dbReference>
<sequence>MAVTNVAELNALVERVKKAQREYASFTQEQVDKIFRAAALAAADARIPLAKMAVAESGMGIVEDKVIKNHFASEYIYNAYKDEKTCGVLSEDDTFGTITIAEPIGIICGIVPTTNPTSTAIFKSLISLKTRNAIIFSPHPRAKDATNKAADIVLQAAIAAGAPKDLIGWIDQPSVELSNALMHHPDINLILATGGPGMVKAAYSSGKPAIGVGAGNTPVVIDETADIKRAVASVLMSKTFDNGVICASEQSVVVVDSVYDAVRERFATHGGYLLQGKELKAVQDVILKNGALNAAIVGQPAYKIAELAGFSVPENTKILIGEVTVVDESEPFAHEKLSPTLAMYRAKDFEDAVEKAEKLVAMGGIGHTSCLYTDQDNQPARVSYFGQKMKTARILINTPASQGGIGDLYNFKLAPSLTLGCGSWGGNSISENVGPKHLINKKTVAKRAENMLWHKLPKSIYFRRGSLPIALDEVITDGHKRALIVTDRFLFNNGYADQITSVLKAAGVETEVFFEVEADPTLSIVRKGAELANSFKPDVIIALGGGSPMDAAKIMWVMYEHPETHFEELALRFMDIRKRIYKFPKMGVKAKMIAVTTTSGTGSEVTPFAVVTDDATGQKYPLADYALTPDMAIVDANLVMDMPKSLCAFGGLDAVTHAMEAYVSVLASEFSDGQALQALKLLKEYLPASYHEGSKNPVARERVHSAATIAGIAFANAFLGVCHSMAHKLGSQFHIPHGLANALLICNVIRYNANDNPTKQTAFSQYDRPQARRRYAEIADHLGLSAPGDRTAAKIEKLLAWLETLKAELGIPKSIREAGVQEADFLANVDKLSEDAFDDQCTGANPRYPLISELKQILLDTYYGRDYVEGETAAKKEAAPAKAEKKAKKSA</sequence>
<name>ADHE_ECOLI</name>
<proteinExistence type="evidence at protein level"/>
<comment type="function">
    <text evidence="3 4 6 8 11 16">Under fermentative conditions, catalyzes the sequential NADH-dependent reduction of acetyl-CoA to acetaldehyde and then to ethanol (PubMed:10612730, PubMed:10922373, PubMed:17280641, PubMed:2015910, PubMed:6752127). Under aerobic conditions, despite the reversibility of the two NADH-coupled reactions, wild-type E.coli cannot grow on ethanol as the sole carbon and energy source due to the down-regulation of adhE transcription and the inactivation of the enzyme by metal-catalyzed oxidation (MCO) (PubMed:10922373). Nevertheless, in the presence of oxygen, AdhE may act as a hydrogen peroxide scavenger and have a protective role against oxidative stress (PubMed:12783863).</text>
</comment>
<comment type="catalytic activity">
    <reaction evidence="3 4 8 11">
        <text>acetaldehyde + NAD(+) + CoA = acetyl-CoA + NADH + H(+)</text>
        <dbReference type="Rhea" id="RHEA:23288"/>
        <dbReference type="ChEBI" id="CHEBI:15343"/>
        <dbReference type="ChEBI" id="CHEBI:15378"/>
        <dbReference type="ChEBI" id="CHEBI:57287"/>
        <dbReference type="ChEBI" id="CHEBI:57288"/>
        <dbReference type="ChEBI" id="CHEBI:57540"/>
        <dbReference type="ChEBI" id="CHEBI:57945"/>
        <dbReference type="EC" id="1.2.1.10"/>
    </reaction>
    <physiologicalReaction direction="right-to-left" evidence="22">
        <dbReference type="Rhea" id="RHEA:23290"/>
    </physiologicalReaction>
</comment>
<comment type="catalytic activity">
    <reaction evidence="4 8 11">
        <text>ethanol + NAD(+) = acetaldehyde + NADH + H(+)</text>
        <dbReference type="Rhea" id="RHEA:25290"/>
        <dbReference type="ChEBI" id="CHEBI:15343"/>
        <dbReference type="ChEBI" id="CHEBI:15378"/>
        <dbReference type="ChEBI" id="CHEBI:16236"/>
        <dbReference type="ChEBI" id="CHEBI:57540"/>
        <dbReference type="ChEBI" id="CHEBI:57945"/>
        <dbReference type="EC" id="1.1.1.1"/>
    </reaction>
    <physiologicalReaction direction="right-to-left" evidence="22">
        <dbReference type="Rhea" id="RHEA:25292"/>
    </physiologicalReaction>
</comment>
<comment type="catalytic activity">
    <reaction evidence="4 8 11">
        <text>a primary alcohol + NAD(+) = an aldehyde + NADH + H(+)</text>
        <dbReference type="Rhea" id="RHEA:10736"/>
        <dbReference type="ChEBI" id="CHEBI:15378"/>
        <dbReference type="ChEBI" id="CHEBI:15734"/>
        <dbReference type="ChEBI" id="CHEBI:17478"/>
        <dbReference type="ChEBI" id="CHEBI:57540"/>
        <dbReference type="ChEBI" id="CHEBI:57945"/>
        <dbReference type="EC" id="1.1.1.1"/>
    </reaction>
</comment>
<comment type="cofactor">
    <cofactor evidence="7 11 14">
        <name>Fe(2+)</name>
        <dbReference type="ChEBI" id="CHEBI:29033"/>
    </cofactor>
</comment>
<comment type="activity regulation">
    <text evidence="3 5 10 13 14 15">Formation of filaments, called spirosomes, is critical for activity (PubMed:31586059, PubMed:32188856, PubMed:32523125). Filamentation is essential for substrate channeling between the ALDH and ADH domains and efficient coupling of the ALDH and ADH enzymatic activities, and for the regulation of enzyme activity (PubMed:32188856, PubMed:32523125). In the absence of ligands, the spirosomes are compact (PubMed:31586059, PubMed:32188856, PubMed:32523125). Binding of NAD(+) and Fe(2+) cofactors induces conformational changes and extension of the filaments, leading to the activation of the enzyme (PubMed:31586059, PubMed:32188856, PubMed:32523125). AdhE is inhibited in the presence of oxygen by metal-catalyzed oxidation (MCO) and by heat stress (PubMed:11917132, PubMed:19238259). The chaperone DnaK has a protective effect on AdhE activity under aerobic but not anaerobic conditions (PubMed:11917132). DnaK may protect AdhE and AdhE mutants against irreversible MCO damages and improve their ability to grow aerobically on ethanol (PubMed:11917132). IbpA and IbpB protect AdhE against thermal and oxidative inactivation during oxidative stress, providing that the enzyme remained soluble, and increase the efficiency of reactivation of heat-denatured AdhE by the DnaK system (PubMed:19238259). Acetaldehyde dehydrogenase activity is inhibited by guaiacol, which mimics an intermediate of ubiquinone synthesis (PubMed:10612730).</text>
</comment>
<comment type="biophysicochemical properties">
    <kinetics>
        <KM evidence="4">5.4 mM for acetaldehyde (for acetaldehyde dehydrogenase activity)</KM>
        <KM evidence="4">240 mM for ethanol (for ethanol dehydrogenase activity)</KM>
    </kinetics>
</comment>
<comment type="subunit">
    <text evidence="7 13 14 15">Forms long filaments, called spirosomes (PubMed:31586059, PubMed:32188856, PubMed:32523125). Forms rod-like ultrastructures composed of 20-60 identical subunits (PubMed:1325457). Two monomers form a dimer in a head-to-head arm-crossing fashion through the ALDH domains (PubMed:31586059). Subsequently, two dimers form one helical pitch via the interaction of ADH domains in a tail-to-tail manner (PubMed:31586059, PubMed:32523125). These units are further assembled into spirosomes (PubMed:31586059, PubMed:32188856, PubMed:32523125). Formation of these spirosomes is required for activity (PubMed:31586059, PubMed:32188856, PubMed:32523125). Can be isolated in vitro in a wide range of oligomeric states (PubMed:31586059).</text>
</comment>
<comment type="interaction">
    <interactant intactId="EBI-543417">
        <id>P0A9Q7</id>
    </interactant>
    <interactant intactId="EBI-543417">
        <id>P0A9Q7</id>
        <label>adhE</label>
    </interactant>
    <organismsDiffer>false</organismsDiffer>
    <experiments>2</experiments>
</comment>
<comment type="interaction">
    <interactant intactId="EBI-543417">
        <id>P0A9Q7</id>
    </interactant>
    <interactant intactId="EBI-543439">
        <id>P0A7V0</id>
        <label>rpsB</label>
    </interactant>
    <organismsDiffer>false</organismsDiffer>
    <experiments>2</experiments>
</comment>
<comment type="induction">
    <text evidence="2">Expression is about 10-fold higher during anaerobic than during aerobic growth (PubMed:10601216). Contains two transcriptional start sites, which are both functional. Both start sites are NarL repressible in the presence of nitrate and activated by RpoS. Fis is required only for transcriptional initiation from the upstream start site. Fnr can regulate expression from the downstream transcriptional start site only in the physical absence of the upstream region (PubMed:10601216). However, under all experimental conditions tested, only the upstream start site is active and acts as a silencer of downstream transcription (PubMed:10601216). Translation of the mRNA starting at the upstream site, but not the one starting atthe downstream site, requires RNase III (PubMed:10601216).</text>
</comment>
<comment type="domain">
    <text evidence="13 14">Contains an N-terminal aldehyde dehydrogenase (ALDH) domain and a C-terminal iron-dependent alcohol dehydrogenase (ADH) domain, interconnected by a short linker (PubMed:31586059, PubMed:32188856). ALDH and ADH activities are topologically separated in the compact spirosome architecture (PubMed:31586059).</text>
</comment>
<comment type="disruption phenotype">
    <text evidence="6 16">Deletion mutant cannot grow aerobically in minimal media, is extremely sensitive to oxidative stress and shows morphologic defects that are associated with deficient septum formation (PubMed:12783863). In addition, mutant displays increased levels of internal peroxides and increased protein carbonyl content (PubMed:12783863). Both acetaldehyde dehydrogenase and alcohol dehydrogenase activities are thermolabile in temperature-sensitive mutants (PubMed:6752127).</text>
</comment>
<comment type="miscellaneous">
    <text evidence="7 8 11">Has previously been proposed to have pyruvate formate-lyase (PFL) deactivase activity and to catalyze the quenching of the PFL radical in an Fe(2+), NAD and CoA dependent reaction (PubMed:1325457, PubMed:2015910). However, it was shown later that AdhE does not catalyze the deactivation of active PFL (PubMed:17280641). Inactivation of PFL is attributed to the CoA and Fe(II) present, which appear to increase the rate of deactivation (PubMed:17280641).</text>
</comment>
<comment type="similarity">
    <text evidence="21">In the N-terminal section; belongs to the aldehyde dehydrogenase family.</text>
</comment>
<comment type="similarity">
    <text evidence="21">In the C-terminal section; belongs to the iron-containing alcohol dehydrogenase family.</text>
</comment>
<gene>
    <name evidence="19" type="primary">adhE</name>
    <name type="synonym">ana</name>
    <name type="ordered locus">b1241</name>
    <name type="ordered locus">JW1228</name>
</gene>